<dbReference type="EMBL" id="AB044971">
    <property type="protein sequence ID" value="BAB41210.1"/>
    <property type="molecule type" value="mRNA"/>
</dbReference>
<dbReference type="EMBL" id="AK291903">
    <property type="protein sequence ID" value="BAF84592.1"/>
    <property type="molecule type" value="mRNA"/>
</dbReference>
<dbReference type="EMBL" id="AC018737">
    <property type="protein sequence ID" value="AAY14830.1"/>
    <property type="molecule type" value="Genomic_DNA"/>
</dbReference>
<dbReference type="EMBL" id="CH471103">
    <property type="protein sequence ID" value="EAW95261.1"/>
    <property type="molecule type" value="Genomic_DNA"/>
</dbReference>
<dbReference type="EMBL" id="BC012457">
    <property type="protein sequence ID" value="AAH12457.1"/>
    <property type="molecule type" value="mRNA"/>
</dbReference>
<dbReference type="EMBL" id="BC022990">
    <property type="protein sequence ID" value="AAH22990.1"/>
    <property type="molecule type" value="mRNA"/>
</dbReference>
<dbReference type="EMBL" id="BC024238">
    <property type="protein sequence ID" value="AAH24238.1"/>
    <property type="molecule type" value="mRNA"/>
</dbReference>
<dbReference type="CCDS" id="CCDS2135.1"/>
<dbReference type="RefSeq" id="NP_115766.3">
    <property type="nucleotide sequence ID" value="NM_032390.4"/>
</dbReference>
<dbReference type="PDB" id="2AFF">
    <property type="method" value="NMR"/>
    <property type="chains" value="B=226-269"/>
</dbReference>
<dbReference type="PDB" id="8FKP">
    <property type="method" value="EM"/>
    <property type="resolution" value="2.85 A"/>
    <property type="chains" value="SH=1-293"/>
</dbReference>
<dbReference type="PDB" id="8FKQ">
    <property type="method" value="EM"/>
    <property type="resolution" value="2.76 A"/>
    <property type="chains" value="SH=1-293"/>
</dbReference>
<dbReference type="PDB" id="8FKR">
    <property type="method" value="EM"/>
    <property type="resolution" value="2.89 A"/>
    <property type="chains" value="SH=1-293"/>
</dbReference>
<dbReference type="PDB" id="8FKS">
    <property type="method" value="EM"/>
    <property type="resolution" value="2.88 A"/>
    <property type="chains" value="SH=1-293"/>
</dbReference>
<dbReference type="PDB" id="8FKT">
    <property type="method" value="EM"/>
    <property type="resolution" value="2.81 A"/>
    <property type="chains" value="SH=1-293"/>
</dbReference>
<dbReference type="PDB" id="8FKU">
    <property type="method" value="EM"/>
    <property type="resolution" value="2.82 A"/>
    <property type="chains" value="SH=1-293"/>
</dbReference>
<dbReference type="PDB" id="8FKV">
    <property type="method" value="EM"/>
    <property type="resolution" value="2.47 A"/>
    <property type="chains" value="SH=1-293"/>
</dbReference>
<dbReference type="PDB" id="8FKW">
    <property type="method" value="EM"/>
    <property type="resolution" value="2.50 A"/>
    <property type="chains" value="SH=1-293"/>
</dbReference>
<dbReference type="PDB" id="8FKX">
    <property type="method" value="EM"/>
    <property type="resolution" value="2.59 A"/>
    <property type="chains" value="SH=1-293"/>
</dbReference>
<dbReference type="PDB" id="8FKY">
    <property type="method" value="EM"/>
    <property type="resolution" value="2.67 A"/>
    <property type="chains" value="SH=1-293"/>
</dbReference>
<dbReference type="PDB" id="8FKZ">
    <property type="method" value="EM"/>
    <property type="resolution" value="3.04 A"/>
    <property type="chains" value="SH=1-293"/>
</dbReference>
<dbReference type="PDB" id="8FL2">
    <property type="method" value="EM"/>
    <property type="resolution" value="2.67 A"/>
    <property type="chains" value="SH=1-293"/>
</dbReference>
<dbReference type="PDB" id="8FL3">
    <property type="method" value="EM"/>
    <property type="resolution" value="2.53 A"/>
    <property type="chains" value="SH=1-293"/>
</dbReference>
<dbReference type="PDB" id="8FL6">
    <property type="method" value="EM"/>
    <property type="resolution" value="2.62 A"/>
    <property type="chains" value="SH=1-293"/>
</dbReference>
<dbReference type="PDB" id="8FL7">
    <property type="method" value="EM"/>
    <property type="resolution" value="2.55 A"/>
    <property type="chains" value="SH=1-293"/>
</dbReference>
<dbReference type="PDB" id="8FLA">
    <property type="method" value="EM"/>
    <property type="resolution" value="2.63 A"/>
    <property type="chains" value="SH=1-293"/>
</dbReference>
<dbReference type="PDB" id="8FLB">
    <property type="method" value="EM"/>
    <property type="resolution" value="2.55 A"/>
    <property type="chains" value="SH=1-293"/>
</dbReference>
<dbReference type="PDB" id="8FLD">
    <property type="method" value="EM"/>
    <property type="resolution" value="2.58 A"/>
    <property type="chains" value="SH=1-293"/>
</dbReference>
<dbReference type="PDB" id="8FLE">
    <property type="method" value="EM"/>
    <property type="resolution" value="2.48 A"/>
    <property type="chains" value="SH=1-293"/>
</dbReference>
<dbReference type="PDB" id="8INE">
    <property type="method" value="EM"/>
    <property type="resolution" value="3.20 A"/>
    <property type="chains" value="t=1-293"/>
</dbReference>
<dbReference type="PDB" id="8INF">
    <property type="method" value="EM"/>
    <property type="resolution" value="3.00 A"/>
    <property type="chains" value="t=1-293"/>
</dbReference>
<dbReference type="PDB" id="8IPX">
    <property type="method" value="EM"/>
    <property type="resolution" value="4.30 A"/>
    <property type="chains" value="t=1-293"/>
</dbReference>
<dbReference type="PDB" id="8IPY">
    <property type="method" value="EM"/>
    <property type="resolution" value="3.20 A"/>
    <property type="chains" value="t=1-293"/>
</dbReference>
<dbReference type="PDB" id="8IR3">
    <property type="method" value="EM"/>
    <property type="resolution" value="3.50 A"/>
    <property type="chains" value="t=1-293"/>
</dbReference>
<dbReference type="PDBsum" id="2AFF"/>
<dbReference type="PDBsum" id="8FKP"/>
<dbReference type="PDBsum" id="8FKQ"/>
<dbReference type="PDBsum" id="8FKR"/>
<dbReference type="PDBsum" id="8FKS"/>
<dbReference type="PDBsum" id="8FKT"/>
<dbReference type="PDBsum" id="8FKU"/>
<dbReference type="PDBsum" id="8FKV"/>
<dbReference type="PDBsum" id="8FKW"/>
<dbReference type="PDBsum" id="8FKX"/>
<dbReference type="PDBsum" id="8FKY"/>
<dbReference type="PDBsum" id="8FKZ"/>
<dbReference type="PDBsum" id="8FL2"/>
<dbReference type="PDBsum" id="8FL3"/>
<dbReference type="PDBsum" id="8FL6"/>
<dbReference type="PDBsum" id="8FL7"/>
<dbReference type="PDBsum" id="8FLA"/>
<dbReference type="PDBsum" id="8FLB"/>
<dbReference type="PDBsum" id="8FLD"/>
<dbReference type="PDBsum" id="8FLE"/>
<dbReference type="PDBsum" id="8INE"/>
<dbReference type="PDBsum" id="8INF"/>
<dbReference type="PDBsum" id="8IPX"/>
<dbReference type="PDBsum" id="8IPY"/>
<dbReference type="PDBsum" id="8IR3"/>
<dbReference type="BMRB" id="Q9BYG3"/>
<dbReference type="EMDB" id="EMD-29252"/>
<dbReference type="EMDB" id="EMD-29253"/>
<dbReference type="EMDB" id="EMD-29254"/>
<dbReference type="EMDB" id="EMD-29255"/>
<dbReference type="EMDB" id="EMD-29256"/>
<dbReference type="EMDB" id="EMD-29257"/>
<dbReference type="EMDB" id="EMD-29258"/>
<dbReference type="EMDB" id="EMD-29259"/>
<dbReference type="EMDB" id="EMD-29260"/>
<dbReference type="EMDB" id="EMD-29261"/>
<dbReference type="EMDB" id="EMD-29262"/>
<dbReference type="EMDB" id="EMD-29265"/>
<dbReference type="EMDB" id="EMD-29266"/>
<dbReference type="EMDB" id="EMD-29268"/>
<dbReference type="EMDB" id="EMD-29269"/>
<dbReference type="EMDB" id="EMD-29272"/>
<dbReference type="EMDB" id="EMD-29273"/>
<dbReference type="EMDB" id="EMD-29275"/>
<dbReference type="EMDB" id="EMD-29276"/>
<dbReference type="EMDB" id="EMD-35596"/>
<dbReference type="EMDB" id="EMD-35597"/>
<dbReference type="EMDB" id="EMD-35649"/>
<dbReference type="EMDB" id="EMD-35651"/>
<dbReference type="EMDB" id="EMD-35673"/>
<dbReference type="SMR" id="Q9BYG3"/>
<dbReference type="BioGRID" id="124066">
    <property type="interactions" value="455"/>
</dbReference>
<dbReference type="DIP" id="DIP-28134N"/>
<dbReference type="FunCoup" id="Q9BYG3">
    <property type="interactions" value="3082"/>
</dbReference>
<dbReference type="IntAct" id="Q9BYG3">
    <property type="interactions" value="203"/>
</dbReference>
<dbReference type="MINT" id="Q9BYG3"/>
<dbReference type="STRING" id="9606.ENSP00000285814"/>
<dbReference type="ChEMBL" id="CHEMBL4523443"/>
<dbReference type="GlyGen" id="Q9BYG3">
    <property type="glycosylation" value="2 sites, 1 O-linked glycan (1 site)"/>
</dbReference>
<dbReference type="iPTMnet" id="Q9BYG3"/>
<dbReference type="PhosphoSitePlus" id="Q9BYG3"/>
<dbReference type="SwissPalm" id="Q9BYG3"/>
<dbReference type="BioMuta" id="NIFK"/>
<dbReference type="DMDM" id="71151919"/>
<dbReference type="jPOST" id="Q9BYG3"/>
<dbReference type="MassIVE" id="Q9BYG3"/>
<dbReference type="PaxDb" id="9606-ENSP00000285814"/>
<dbReference type="PeptideAtlas" id="Q9BYG3"/>
<dbReference type="ProteomicsDB" id="79637"/>
<dbReference type="Pumba" id="Q9BYG3"/>
<dbReference type="Antibodypedia" id="4205">
    <property type="antibodies" value="393 antibodies from 34 providers"/>
</dbReference>
<dbReference type="DNASU" id="84365"/>
<dbReference type="Ensembl" id="ENST00000285814.9">
    <property type="protein sequence ID" value="ENSP00000285814.4"/>
    <property type="gene ID" value="ENSG00000155438.12"/>
</dbReference>
<dbReference type="GeneID" id="84365"/>
<dbReference type="KEGG" id="hsa:84365"/>
<dbReference type="MANE-Select" id="ENST00000285814.9">
    <property type="protein sequence ID" value="ENSP00000285814.4"/>
    <property type="RefSeq nucleotide sequence ID" value="NM_032390.5"/>
    <property type="RefSeq protein sequence ID" value="NP_115766.3"/>
</dbReference>
<dbReference type="UCSC" id="uc002tnk.4">
    <property type="organism name" value="human"/>
</dbReference>
<dbReference type="AGR" id="HGNC:17838"/>
<dbReference type="CTD" id="84365"/>
<dbReference type="DisGeNET" id="84365"/>
<dbReference type="GeneCards" id="NIFK"/>
<dbReference type="HGNC" id="HGNC:17838">
    <property type="gene designation" value="NIFK"/>
</dbReference>
<dbReference type="HPA" id="ENSG00000155438">
    <property type="expression patterns" value="Low tissue specificity"/>
</dbReference>
<dbReference type="MIM" id="611970">
    <property type="type" value="gene"/>
</dbReference>
<dbReference type="neXtProt" id="NX_Q9BYG3"/>
<dbReference type="OpenTargets" id="ENSG00000155438"/>
<dbReference type="PharmGKB" id="PA38470"/>
<dbReference type="VEuPathDB" id="HostDB:ENSG00000155438"/>
<dbReference type="eggNOG" id="KOG4208">
    <property type="taxonomic scope" value="Eukaryota"/>
</dbReference>
<dbReference type="GeneTree" id="ENSGT00390000011515"/>
<dbReference type="HOGENOM" id="CLU_025741_1_0_1"/>
<dbReference type="InParanoid" id="Q9BYG3"/>
<dbReference type="OMA" id="FECKDVA"/>
<dbReference type="OrthoDB" id="21467at2759"/>
<dbReference type="PAN-GO" id="Q9BYG3">
    <property type="GO annotations" value="3 GO annotations based on evolutionary models"/>
</dbReference>
<dbReference type="PhylomeDB" id="Q9BYG3"/>
<dbReference type="TreeFam" id="TF315137"/>
<dbReference type="PathwayCommons" id="Q9BYG3"/>
<dbReference type="SignaLink" id="Q9BYG3"/>
<dbReference type="SIGNOR" id="Q9BYG3"/>
<dbReference type="BioGRID-ORCS" id="84365">
    <property type="hits" value="779 hits in 1103 CRISPR screens"/>
</dbReference>
<dbReference type="CD-CODE" id="232F8A39">
    <property type="entry name" value="P-body"/>
</dbReference>
<dbReference type="CD-CODE" id="91857CE7">
    <property type="entry name" value="Nucleolus"/>
</dbReference>
<dbReference type="ChiTaRS" id="NIFK">
    <property type="organism name" value="human"/>
</dbReference>
<dbReference type="EvolutionaryTrace" id="Q9BYG3"/>
<dbReference type="GeneWiki" id="MKI67IP"/>
<dbReference type="GenomeRNAi" id="84365"/>
<dbReference type="Pharos" id="Q9BYG3">
    <property type="development level" value="Tbio"/>
</dbReference>
<dbReference type="PRO" id="PR:Q9BYG3"/>
<dbReference type="Proteomes" id="UP000005640">
    <property type="component" value="Chromosome 2"/>
</dbReference>
<dbReference type="RNAct" id="Q9BYG3">
    <property type="molecule type" value="protein"/>
</dbReference>
<dbReference type="Bgee" id="ENSG00000155438">
    <property type="expression patterns" value="Expressed in calcaneal tendon and 190 other cell types or tissues"/>
</dbReference>
<dbReference type="ExpressionAtlas" id="Q9BYG3">
    <property type="expression patterns" value="baseline and differential"/>
</dbReference>
<dbReference type="GO" id="GO:0005694">
    <property type="term" value="C:chromosome"/>
    <property type="evidence" value="ECO:0000314"/>
    <property type="project" value="HPA"/>
</dbReference>
<dbReference type="GO" id="GO:0000794">
    <property type="term" value="C:condensed nuclear chromosome"/>
    <property type="evidence" value="ECO:0000314"/>
    <property type="project" value="UniProtKB"/>
</dbReference>
<dbReference type="GO" id="GO:0005737">
    <property type="term" value="C:cytoplasm"/>
    <property type="evidence" value="ECO:0000314"/>
    <property type="project" value="UniProtKB"/>
</dbReference>
<dbReference type="GO" id="GO:0005730">
    <property type="term" value="C:nucleolus"/>
    <property type="evidence" value="ECO:0000314"/>
    <property type="project" value="UniProtKB"/>
</dbReference>
<dbReference type="GO" id="GO:0005654">
    <property type="term" value="C:nucleoplasm"/>
    <property type="evidence" value="ECO:0000314"/>
    <property type="project" value="UniProtKB"/>
</dbReference>
<dbReference type="GO" id="GO:0003723">
    <property type="term" value="F:RNA binding"/>
    <property type="evidence" value="ECO:0000314"/>
    <property type="project" value="UniProtKB"/>
</dbReference>
<dbReference type="GO" id="GO:0065003">
    <property type="term" value="P:protein-containing complex assembly"/>
    <property type="evidence" value="ECO:0000303"/>
    <property type="project" value="UniProtKB"/>
</dbReference>
<dbReference type="GO" id="GO:0016072">
    <property type="term" value="P:rRNA metabolic process"/>
    <property type="evidence" value="ECO:0000303"/>
    <property type="project" value="UniProtKB"/>
</dbReference>
<dbReference type="GO" id="GO:0009303">
    <property type="term" value="P:rRNA transcription"/>
    <property type="evidence" value="ECO:0000303"/>
    <property type="project" value="UniProtKB"/>
</dbReference>
<dbReference type="CDD" id="cd12307">
    <property type="entry name" value="RRM_NIFK_like"/>
    <property type="match status" value="1"/>
</dbReference>
<dbReference type="FunFam" id="3.30.70.330:FF:000526">
    <property type="entry name" value="MKI67 (FHA domain) interacting nucleolar phosphoprotein"/>
    <property type="match status" value="1"/>
</dbReference>
<dbReference type="Gene3D" id="3.30.70.330">
    <property type="match status" value="1"/>
</dbReference>
<dbReference type="InterPro" id="IPR021043">
    <property type="entry name" value="NIFK_FHA_Ki67-binding"/>
</dbReference>
<dbReference type="InterPro" id="IPR012677">
    <property type="entry name" value="Nucleotide-bd_a/b_plait_sf"/>
</dbReference>
<dbReference type="InterPro" id="IPR035979">
    <property type="entry name" value="RBD_domain_sf"/>
</dbReference>
<dbReference type="InterPro" id="IPR000504">
    <property type="entry name" value="RRM_dom"/>
</dbReference>
<dbReference type="PANTHER" id="PTHR46754">
    <property type="entry name" value="MKI67 FHA DOMAIN-INTERACTING NUCLEOLAR PHOSPHOPROTEIN"/>
    <property type="match status" value="1"/>
</dbReference>
<dbReference type="Pfam" id="PF12196">
    <property type="entry name" value="hNIFK_binding"/>
    <property type="match status" value="1"/>
</dbReference>
<dbReference type="Pfam" id="PF00076">
    <property type="entry name" value="RRM_1"/>
    <property type="match status" value="1"/>
</dbReference>
<dbReference type="SMART" id="SM00360">
    <property type="entry name" value="RRM"/>
    <property type="match status" value="1"/>
</dbReference>
<dbReference type="SUPFAM" id="SSF54928">
    <property type="entry name" value="RNA-binding domain, RBD"/>
    <property type="match status" value="1"/>
</dbReference>
<dbReference type="PROSITE" id="PS50102">
    <property type="entry name" value="RRM"/>
    <property type="match status" value="1"/>
</dbReference>
<proteinExistence type="evidence at protein level"/>
<reference key="1">
    <citation type="journal article" date="2001" name="J. Biol. Chem.">
        <title>A novel nucleolar protein, NIFK, interacts with the forkhead associated domain of Ki-67 antigen in mitosis.</title>
        <authorList>
            <person name="Takagi M."/>
            <person name="Sueishi M."/>
            <person name="Saiwaki T."/>
            <person name="Kametaka A."/>
            <person name="Yoneda Y."/>
        </authorList>
    </citation>
    <scope>NUCLEOTIDE SEQUENCE [MRNA]</scope>
    <scope>INTERACTION WITH MKI67</scope>
    <scope>MUTAGENESIS OF THR-234 AND THR-238</scope>
    <scope>SUBCELLULAR LOCATION</scope>
    <scope>PHOSPHORYLATION</scope>
</reference>
<reference key="2">
    <citation type="journal article" date="2004" name="Nat. Genet.">
        <title>Complete sequencing and characterization of 21,243 full-length human cDNAs.</title>
        <authorList>
            <person name="Ota T."/>
            <person name="Suzuki Y."/>
            <person name="Nishikawa T."/>
            <person name="Otsuki T."/>
            <person name="Sugiyama T."/>
            <person name="Irie R."/>
            <person name="Wakamatsu A."/>
            <person name="Hayashi K."/>
            <person name="Sato H."/>
            <person name="Nagai K."/>
            <person name="Kimura K."/>
            <person name="Makita H."/>
            <person name="Sekine M."/>
            <person name="Obayashi M."/>
            <person name="Nishi T."/>
            <person name="Shibahara T."/>
            <person name="Tanaka T."/>
            <person name="Ishii S."/>
            <person name="Yamamoto J."/>
            <person name="Saito K."/>
            <person name="Kawai Y."/>
            <person name="Isono Y."/>
            <person name="Nakamura Y."/>
            <person name="Nagahari K."/>
            <person name="Murakami K."/>
            <person name="Yasuda T."/>
            <person name="Iwayanagi T."/>
            <person name="Wagatsuma M."/>
            <person name="Shiratori A."/>
            <person name="Sudo H."/>
            <person name="Hosoiri T."/>
            <person name="Kaku Y."/>
            <person name="Kodaira H."/>
            <person name="Kondo H."/>
            <person name="Sugawara M."/>
            <person name="Takahashi M."/>
            <person name="Kanda K."/>
            <person name="Yokoi T."/>
            <person name="Furuya T."/>
            <person name="Kikkawa E."/>
            <person name="Omura Y."/>
            <person name="Abe K."/>
            <person name="Kamihara K."/>
            <person name="Katsuta N."/>
            <person name="Sato K."/>
            <person name="Tanikawa M."/>
            <person name="Yamazaki M."/>
            <person name="Ninomiya K."/>
            <person name="Ishibashi T."/>
            <person name="Yamashita H."/>
            <person name="Murakawa K."/>
            <person name="Fujimori K."/>
            <person name="Tanai H."/>
            <person name="Kimata M."/>
            <person name="Watanabe M."/>
            <person name="Hiraoka S."/>
            <person name="Chiba Y."/>
            <person name="Ishida S."/>
            <person name="Ono Y."/>
            <person name="Takiguchi S."/>
            <person name="Watanabe S."/>
            <person name="Yosida M."/>
            <person name="Hotuta T."/>
            <person name="Kusano J."/>
            <person name="Kanehori K."/>
            <person name="Takahashi-Fujii A."/>
            <person name="Hara H."/>
            <person name="Tanase T.-O."/>
            <person name="Nomura Y."/>
            <person name="Togiya S."/>
            <person name="Komai F."/>
            <person name="Hara R."/>
            <person name="Takeuchi K."/>
            <person name="Arita M."/>
            <person name="Imose N."/>
            <person name="Musashino K."/>
            <person name="Yuuki H."/>
            <person name="Oshima A."/>
            <person name="Sasaki N."/>
            <person name="Aotsuka S."/>
            <person name="Yoshikawa Y."/>
            <person name="Matsunawa H."/>
            <person name="Ichihara T."/>
            <person name="Shiohata N."/>
            <person name="Sano S."/>
            <person name="Moriya S."/>
            <person name="Momiyama H."/>
            <person name="Satoh N."/>
            <person name="Takami S."/>
            <person name="Terashima Y."/>
            <person name="Suzuki O."/>
            <person name="Nakagawa S."/>
            <person name="Senoh A."/>
            <person name="Mizoguchi H."/>
            <person name="Goto Y."/>
            <person name="Shimizu F."/>
            <person name="Wakebe H."/>
            <person name="Hishigaki H."/>
            <person name="Watanabe T."/>
            <person name="Sugiyama A."/>
            <person name="Takemoto M."/>
            <person name="Kawakami B."/>
            <person name="Yamazaki M."/>
            <person name="Watanabe K."/>
            <person name="Kumagai A."/>
            <person name="Itakura S."/>
            <person name="Fukuzumi Y."/>
            <person name="Fujimori Y."/>
            <person name="Komiyama M."/>
            <person name="Tashiro H."/>
            <person name="Tanigami A."/>
            <person name="Fujiwara T."/>
            <person name="Ono T."/>
            <person name="Yamada K."/>
            <person name="Fujii Y."/>
            <person name="Ozaki K."/>
            <person name="Hirao M."/>
            <person name="Ohmori Y."/>
            <person name="Kawabata A."/>
            <person name="Hikiji T."/>
            <person name="Kobatake N."/>
            <person name="Inagaki H."/>
            <person name="Ikema Y."/>
            <person name="Okamoto S."/>
            <person name="Okitani R."/>
            <person name="Kawakami T."/>
            <person name="Noguchi S."/>
            <person name="Itoh T."/>
            <person name="Shigeta K."/>
            <person name="Senba T."/>
            <person name="Matsumura K."/>
            <person name="Nakajima Y."/>
            <person name="Mizuno T."/>
            <person name="Morinaga M."/>
            <person name="Sasaki M."/>
            <person name="Togashi T."/>
            <person name="Oyama M."/>
            <person name="Hata H."/>
            <person name="Watanabe M."/>
            <person name="Komatsu T."/>
            <person name="Mizushima-Sugano J."/>
            <person name="Satoh T."/>
            <person name="Shirai Y."/>
            <person name="Takahashi Y."/>
            <person name="Nakagawa K."/>
            <person name="Okumura K."/>
            <person name="Nagase T."/>
            <person name="Nomura N."/>
            <person name="Kikuchi H."/>
            <person name="Masuho Y."/>
            <person name="Yamashita R."/>
            <person name="Nakai K."/>
            <person name="Yada T."/>
            <person name="Nakamura Y."/>
            <person name="Ohara O."/>
            <person name="Isogai T."/>
            <person name="Sugano S."/>
        </authorList>
    </citation>
    <scope>NUCLEOTIDE SEQUENCE [LARGE SCALE MRNA]</scope>
    <source>
        <tissue>Skeletal muscle</tissue>
    </source>
</reference>
<reference key="3">
    <citation type="journal article" date="2005" name="Nature">
        <title>Generation and annotation of the DNA sequences of human chromosomes 2 and 4.</title>
        <authorList>
            <person name="Hillier L.W."/>
            <person name="Graves T.A."/>
            <person name="Fulton R.S."/>
            <person name="Fulton L.A."/>
            <person name="Pepin K.H."/>
            <person name="Minx P."/>
            <person name="Wagner-McPherson C."/>
            <person name="Layman D."/>
            <person name="Wylie K."/>
            <person name="Sekhon M."/>
            <person name="Becker M.C."/>
            <person name="Fewell G.A."/>
            <person name="Delehaunty K.D."/>
            <person name="Miner T.L."/>
            <person name="Nash W.E."/>
            <person name="Kremitzki C."/>
            <person name="Oddy L."/>
            <person name="Du H."/>
            <person name="Sun H."/>
            <person name="Bradshaw-Cordum H."/>
            <person name="Ali J."/>
            <person name="Carter J."/>
            <person name="Cordes M."/>
            <person name="Harris A."/>
            <person name="Isak A."/>
            <person name="van Brunt A."/>
            <person name="Nguyen C."/>
            <person name="Du F."/>
            <person name="Courtney L."/>
            <person name="Kalicki J."/>
            <person name="Ozersky P."/>
            <person name="Abbott S."/>
            <person name="Armstrong J."/>
            <person name="Belter E.A."/>
            <person name="Caruso L."/>
            <person name="Cedroni M."/>
            <person name="Cotton M."/>
            <person name="Davidson T."/>
            <person name="Desai A."/>
            <person name="Elliott G."/>
            <person name="Erb T."/>
            <person name="Fronick C."/>
            <person name="Gaige T."/>
            <person name="Haakenson W."/>
            <person name="Haglund K."/>
            <person name="Holmes A."/>
            <person name="Harkins R."/>
            <person name="Kim K."/>
            <person name="Kruchowski S.S."/>
            <person name="Strong C.M."/>
            <person name="Grewal N."/>
            <person name="Goyea E."/>
            <person name="Hou S."/>
            <person name="Levy A."/>
            <person name="Martinka S."/>
            <person name="Mead K."/>
            <person name="McLellan M.D."/>
            <person name="Meyer R."/>
            <person name="Randall-Maher J."/>
            <person name="Tomlinson C."/>
            <person name="Dauphin-Kohlberg S."/>
            <person name="Kozlowicz-Reilly A."/>
            <person name="Shah N."/>
            <person name="Swearengen-Shahid S."/>
            <person name="Snider J."/>
            <person name="Strong J.T."/>
            <person name="Thompson J."/>
            <person name="Yoakum M."/>
            <person name="Leonard S."/>
            <person name="Pearman C."/>
            <person name="Trani L."/>
            <person name="Radionenko M."/>
            <person name="Waligorski J.E."/>
            <person name="Wang C."/>
            <person name="Rock S.M."/>
            <person name="Tin-Wollam A.-M."/>
            <person name="Maupin R."/>
            <person name="Latreille P."/>
            <person name="Wendl M.C."/>
            <person name="Yang S.-P."/>
            <person name="Pohl C."/>
            <person name="Wallis J.W."/>
            <person name="Spieth J."/>
            <person name="Bieri T.A."/>
            <person name="Berkowicz N."/>
            <person name="Nelson J.O."/>
            <person name="Osborne J."/>
            <person name="Ding L."/>
            <person name="Meyer R."/>
            <person name="Sabo A."/>
            <person name="Shotland Y."/>
            <person name="Sinha P."/>
            <person name="Wohldmann P.E."/>
            <person name="Cook L.L."/>
            <person name="Hickenbotham M.T."/>
            <person name="Eldred J."/>
            <person name="Williams D."/>
            <person name="Jones T.A."/>
            <person name="She X."/>
            <person name="Ciccarelli F.D."/>
            <person name="Izaurralde E."/>
            <person name="Taylor J."/>
            <person name="Schmutz J."/>
            <person name="Myers R.M."/>
            <person name="Cox D.R."/>
            <person name="Huang X."/>
            <person name="McPherson J.D."/>
            <person name="Mardis E.R."/>
            <person name="Clifton S.W."/>
            <person name="Warren W.C."/>
            <person name="Chinwalla A.T."/>
            <person name="Eddy S.R."/>
            <person name="Marra M.A."/>
            <person name="Ovcharenko I."/>
            <person name="Furey T.S."/>
            <person name="Miller W."/>
            <person name="Eichler E.E."/>
            <person name="Bork P."/>
            <person name="Suyama M."/>
            <person name="Torrents D."/>
            <person name="Waterston R.H."/>
            <person name="Wilson R.K."/>
        </authorList>
    </citation>
    <scope>NUCLEOTIDE SEQUENCE [LARGE SCALE GENOMIC DNA]</scope>
</reference>
<reference key="4">
    <citation type="submission" date="2005-07" db="EMBL/GenBank/DDBJ databases">
        <authorList>
            <person name="Mural R.J."/>
            <person name="Istrail S."/>
            <person name="Sutton G.G."/>
            <person name="Florea L."/>
            <person name="Halpern A.L."/>
            <person name="Mobarry C.M."/>
            <person name="Lippert R."/>
            <person name="Walenz B."/>
            <person name="Shatkay H."/>
            <person name="Dew I."/>
            <person name="Miller J.R."/>
            <person name="Flanigan M.J."/>
            <person name="Edwards N.J."/>
            <person name="Bolanos R."/>
            <person name="Fasulo D."/>
            <person name="Halldorsson B.V."/>
            <person name="Hannenhalli S."/>
            <person name="Turner R."/>
            <person name="Yooseph S."/>
            <person name="Lu F."/>
            <person name="Nusskern D.R."/>
            <person name="Shue B.C."/>
            <person name="Zheng X.H."/>
            <person name="Zhong F."/>
            <person name="Delcher A.L."/>
            <person name="Huson D.H."/>
            <person name="Kravitz S.A."/>
            <person name="Mouchard L."/>
            <person name="Reinert K."/>
            <person name="Remington K.A."/>
            <person name="Clark A.G."/>
            <person name="Waterman M.S."/>
            <person name="Eichler E.E."/>
            <person name="Adams M.D."/>
            <person name="Hunkapiller M.W."/>
            <person name="Myers E.W."/>
            <person name="Venter J.C."/>
        </authorList>
    </citation>
    <scope>NUCLEOTIDE SEQUENCE [LARGE SCALE GENOMIC DNA]</scope>
</reference>
<reference key="5">
    <citation type="journal article" date="2004" name="Genome Res.">
        <title>The status, quality, and expansion of the NIH full-length cDNA project: the Mammalian Gene Collection (MGC).</title>
        <authorList>
            <consortium name="The MGC Project Team"/>
        </authorList>
    </citation>
    <scope>NUCLEOTIDE SEQUENCE [LARGE SCALE MRNA]</scope>
    <scope>VARIANT GLN-144</scope>
    <source>
        <tissue>Brain</tissue>
        <tissue>Lung</tissue>
        <tissue>Placenta</tissue>
    </source>
</reference>
<reference key="6">
    <citation type="submission" date="2009-03" db="UniProtKB">
        <authorList>
            <person name="Bienvenut W.V."/>
            <person name="Waridel P."/>
            <person name="Quadroni M."/>
        </authorList>
    </citation>
    <scope>PROTEIN SEQUENCE OF 2-24; 87-114; 180-192; 227-244 AND 272-284</scope>
    <scope>CLEAVAGE OF INITIATOR METHIONINE</scope>
    <scope>ACETYLATION AT ALA-2</scope>
    <scope>IDENTIFICATION BY MASS SPECTROMETRY</scope>
    <source>
        <tissue>Cervix carcinoma</tissue>
    </source>
</reference>
<reference key="7">
    <citation type="journal article" date="2002" name="Mol. Biol. Cell">
        <title>Functional proteomic analysis of human nucleolus.</title>
        <authorList>
            <person name="Scherl A."/>
            <person name="Coute Y."/>
            <person name="Deon C."/>
            <person name="Calle A."/>
            <person name="Kindbeiter K."/>
            <person name="Sanchez J.-C."/>
            <person name="Greco A."/>
            <person name="Hochstrasser D.F."/>
            <person name="Diaz J.-J."/>
        </authorList>
    </citation>
    <scope>SUBCELLULAR LOCATION [LARGE SCALE ANALYSIS]</scope>
    <source>
        <tissue>Cervix carcinoma</tissue>
    </source>
</reference>
<reference key="8">
    <citation type="journal article" date="2004" name="J. Mol. Biol.">
        <title>Structure of human Ki67 FHA domain and its binding to a phosphoprotein fragment from hNIFK reveal unique recognition sites and new views to the structural basis of FHA domain functions.</title>
        <authorList>
            <person name="Li H."/>
            <person name="Byeon I.-J."/>
            <person name="Ju Y."/>
            <person name="Tsai M.-D."/>
        </authorList>
    </citation>
    <scope>PHOSPHORYLATION AT THR-234</scope>
    <scope>INTERACTION WITH MKI67</scope>
</reference>
<reference key="9">
    <citation type="journal article" date="2006" name="Cell">
        <title>Global, in vivo, and site-specific phosphorylation dynamics in signaling networks.</title>
        <authorList>
            <person name="Olsen J.V."/>
            <person name="Blagoev B."/>
            <person name="Gnad F."/>
            <person name="Macek B."/>
            <person name="Kumar C."/>
            <person name="Mortensen P."/>
            <person name="Mann M."/>
        </authorList>
    </citation>
    <scope>PHOSPHORYLATION [LARGE SCALE ANALYSIS] AT THR-223</scope>
    <scope>IDENTIFICATION BY MASS SPECTROMETRY [LARGE SCALE ANALYSIS]</scope>
    <source>
        <tissue>Cervix carcinoma</tissue>
    </source>
</reference>
<reference key="10">
    <citation type="journal article" date="2008" name="Proc. Natl. Acad. Sci. U.S.A.">
        <title>A quantitative atlas of mitotic phosphorylation.</title>
        <authorList>
            <person name="Dephoure N."/>
            <person name="Zhou C."/>
            <person name="Villen J."/>
            <person name="Beausoleil S.A."/>
            <person name="Bakalarski C.E."/>
            <person name="Elledge S.J."/>
            <person name="Gygi S.P."/>
        </authorList>
    </citation>
    <scope>PHOSPHORYLATION [LARGE SCALE ANALYSIS] AT THR-234; THR-238 AND THR-279</scope>
    <scope>IDENTIFICATION BY MASS SPECTROMETRY [LARGE SCALE ANALYSIS]</scope>
    <source>
        <tissue>Cervix carcinoma</tissue>
    </source>
</reference>
<reference key="11">
    <citation type="journal article" date="2009" name="Anal. Chem.">
        <title>Lys-N and trypsin cover complementary parts of the phosphoproteome in a refined SCX-based approach.</title>
        <authorList>
            <person name="Gauci S."/>
            <person name="Helbig A.O."/>
            <person name="Slijper M."/>
            <person name="Krijgsveld J."/>
            <person name="Heck A.J."/>
            <person name="Mohammed S."/>
        </authorList>
    </citation>
    <scope>ACETYLATION [LARGE SCALE ANALYSIS] AT ALA-2</scope>
    <scope>CLEAVAGE OF INITIATOR METHIONINE [LARGE SCALE ANALYSIS]</scope>
    <scope>IDENTIFICATION BY MASS SPECTROMETRY [LARGE SCALE ANALYSIS]</scope>
</reference>
<reference key="12">
    <citation type="journal article" date="2009" name="Sci. Signal.">
        <title>Quantitative phosphoproteomic analysis of T cell receptor signaling reveals system-wide modulation of protein-protein interactions.</title>
        <authorList>
            <person name="Mayya V."/>
            <person name="Lundgren D.H."/>
            <person name="Hwang S.-I."/>
            <person name="Rezaul K."/>
            <person name="Wu L."/>
            <person name="Eng J.K."/>
            <person name="Rodionov V."/>
            <person name="Han D.K."/>
        </authorList>
    </citation>
    <scope>IDENTIFICATION BY MASS SPECTROMETRY [LARGE SCALE ANALYSIS]</scope>
    <source>
        <tissue>Leukemic T-cell</tissue>
    </source>
</reference>
<reference key="13">
    <citation type="journal article" date="2010" name="Sci. Signal.">
        <title>Quantitative phosphoproteomics reveals widespread full phosphorylation site occupancy during mitosis.</title>
        <authorList>
            <person name="Olsen J.V."/>
            <person name="Vermeulen M."/>
            <person name="Santamaria A."/>
            <person name="Kumar C."/>
            <person name="Miller M.L."/>
            <person name="Jensen L.J."/>
            <person name="Gnad F."/>
            <person name="Cox J."/>
            <person name="Jensen T.S."/>
            <person name="Nigg E.A."/>
            <person name="Brunak S."/>
            <person name="Mann M."/>
        </authorList>
    </citation>
    <scope>PHOSPHORYLATION [LARGE SCALE ANALYSIS] AT SER-218 AND THR-223</scope>
    <scope>IDENTIFICATION BY MASS SPECTROMETRY [LARGE SCALE ANALYSIS]</scope>
    <source>
        <tissue>Cervix carcinoma</tissue>
    </source>
</reference>
<reference key="14">
    <citation type="journal article" date="2011" name="BMC Syst. Biol.">
        <title>Initial characterization of the human central proteome.</title>
        <authorList>
            <person name="Burkard T.R."/>
            <person name="Planyavsky M."/>
            <person name="Kaupe I."/>
            <person name="Breitwieser F.P."/>
            <person name="Buerckstuemmer T."/>
            <person name="Bennett K.L."/>
            <person name="Superti-Furga G."/>
            <person name="Colinge J."/>
        </authorList>
    </citation>
    <scope>IDENTIFICATION BY MASS SPECTROMETRY [LARGE SCALE ANALYSIS]</scope>
</reference>
<reference key="15">
    <citation type="journal article" date="2011" name="Sci. Signal.">
        <title>System-wide temporal characterization of the proteome and phosphoproteome of human embryonic stem cell differentiation.</title>
        <authorList>
            <person name="Rigbolt K.T."/>
            <person name="Prokhorova T.A."/>
            <person name="Akimov V."/>
            <person name="Henningsen J."/>
            <person name="Johansen P.T."/>
            <person name="Kratchmarova I."/>
            <person name="Kassem M."/>
            <person name="Mann M."/>
            <person name="Olsen J.V."/>
            <person name="Blagoev B."/>
        </authorList>
    </citation>
    <scope>PHOSPHORYLATION [LARGE SCALE ANALYSIS] AT SER-218; THR-223 AND SER-247</scope>
    <scope>IDENTIFICATION BY MASS SPECTROMETRY [LARGE SCALE ANALYSIS]</scope>
</reference>
<reference key="16">
    <citation type="journal article" date="2012" name="Mol. Cell. Proteomics">
        <title>Comparative large-scale characterisation of plant vs. mammal proteins reveals similar and idiosyncratic N-alpha acetylation features.</title>
        <authorList>
            <person name="Bienvenut W.V."/>
            <person name="Sumpton D."/>
            <person name="Martinez A."/>
            <person name="Lilla S."/>
            <person name="Espagne C."/>
            <person name="Meinnel T."/>
            <person name="Giglione C."/>
        </authorList>
    </citation>
    <scope>ACETYLATION [LARGE SCALE ANALYSIS] AT ALA-2</scope>
    <scope>CLEAVAGE OF INITIATOR METHIONINE [LARGE SCALE ANALYSIS]</scope>
    <scope>IDENTIFICATION BY MASS SPECTROMETRY [LARGE SCALE ANALYSIS]</scope>
</reference>
<reference key="17">
    <citation type="journal article" date="2013" name="J. Proteome Res.">
        <title>Toward a comprehensive characterization of a human cancer cell phosphoproteome.</title>
        <authorList>
            <person name="Zhou H."/>
            <person name="Di Palma S."/>
            <person name="Preisinger C."/>
            <person name="Peng M."/>
            <person name="Polat A.N."/>
            <person name="Heck A.J."/>
            <person name="Mohammed S."/>
        </authorList>
    </citation>
    <scope>PHOSPHORYLATION [LARGE SCALE ANALYSIS] AT SER-145; THR-223 AND SER-247</scope>
    <scope>IDENTIFICATION BY MASS SPECTROMETRY [LARGE SCALE ANALYSIS]</scope>
    <source>
        <tissue>Cervix carcinoma</tissue>
        <tissue>Erythroleukemia</tissue>
    </source>
</reference>
<reference key="18">
    <citation type="journal article" date="2014" name="Proc. Natl. Acad. Sci. U.S.A.">
        <title>Mapping of SUMO sites and analysis of SUMOylation changes induced by external stimuli.</title>
        <authorList>
            <person name="Impens F."/>
            <person name="Radoshevich L."/>
            <person name="Cossart P."/>
            <person name="Ribet D."/>
        </authorList>
    </citation>
    <scope>SUMOYLATION [LARGE SCALE ANALYSIS] AT LYS-271</scope>
    <scope>IDENTIFICATION BY MASS SPECTROMETRY [LARGE SCALE ANALYSIS]</scope>
</reference>
<reference key="19">
    <citation type="journal article" date="2017" name="Nat. Struct. Mol. Biol.">
        <title>Site-specific mapping of the human SUMO proteome reveals co-modification with phosphorylation.</title>
        <authorList>
            <person name="Hendriks I.A."/>
            <person name="Lyon D."/>
            <person name="Young C."/>
            <person name="Jensen L.J."/>
            <person name="Vertegaal A.C."/>
            <person name="Nielsen M.L."/>
        </authorList>
    </citation>
    <scope>SUMOYLATION [LARGE SCALE ANALYSIS] AT LYS-38; LYS-139; LYS-179; LYS-192 AND LYS-271</scope>
    <scope>IDENTIFICATION BY MASS SPECTROMETRY [LARGE SCALE ANALYSIS]</scope>
</reference>
<reference key="20">
    <citation type="journal article" date="2005" name="Nat. Struct. Mol. Biol.">
        <title>Sequential phosphorylation and multisite interactions characterize specific target recognition by the FHA domain of Ki67.</title>
        <authorList>
            <person name="Byeon I.-J."/>
            <person name="Li H."/>
            <person name="Song H."/>
            <person name="Gronenborn A.M."/>
            <person name="Tsai M.-D."/>
        </authorList>
    </citation>
    <scope>STRUCTURE BY NMR OF 226-269 IN COMPLEX WITH MKI67</scope>
    <scope>IDENTIFICATION BY MASS SPECTROMETRY</scope>
    <scope>MUTAGENESIS OF SER-230; THR-234; PRO-235; THR-238 AND PRO-239</scope>
    <scope>PHOSPHORYLATION AT SER-230; THR-234 AND THR-238</scope>
</reference>
<reference key="21">
    <citation type="journal article" date="2015" name="Biochemistry">
        <title>Protein Arginine Methyltransferase 8: Tetrameric Structure and Protein Substrate Specificity.</title>
        <authorList>
            <person name="Lee W.C."/>
            <person name="Lin W.L."/>
            <person name="Matsui T."/>
            <person name="Chen E.S."/>
            <person name="Wei T.Y."/>
            <person name="Lin W.H."/>
            <person name="Hu H."/>
            <person name="Zheng Y.G."/>
            <person name="Tsai M.D."/>
            <person name="Ho M.C."/>
        </authorList>
    </citation>
    <scope>METHYLATION AT ARG-114; ARG-244; ARG-245 AND ARG-284</scope>
    <scope>IDENTIFICATION BY MASS SPECTROMETRY</scope>
</reference>
<organism>
    <name type="scientific">Homo sapiens</name>
    <name type="common">Human</name>
    <dbReference type="NCBI Taxonomy" id="9606"/>
    <lineage>
        <taxon>Eukaryota</taxon>
        <taxon>Metazoa</taxon>
        <taxon>Chordata</taxon>
        <taxon>Craniata</taxon>
        <taxon>Vertebrata</taxon>
        <taxon>Euteleostomi</taxon>
        <taxon>Mammalia</taxon>
        <taxon>Eutheria</taxon>
        <taxon>Euarchontoglires</taxon>
        <taxon>Primates</taxon>
        <taxon>Haplorrhini</taxon>
        <taxon>Catarrhini</taxon>
        <taxon>Hominidae</taxon>
        <taxon>Homo</taxon>
    </lineage>
</organism>
<protein>
    <recommendedName>
        <fullName>MKI67 FHA domain-interacting nucleolar phosphoprotein</fullName>
    </recommendedName>
    <alternativeName>
        <fullName>Nucleolar phosphoprotein Nopp34</fullName>
    </alternativeName>
    <alternativeName>
        <fullName>Nucleolar protein interacting with the FHA domain of pKI-67</fullName>
        <shortName>hNIFK</shortName>
    </alternativeName>
</protein>
<name>MK67I_HUMAN</name>
<feature type="initiator methionine" description="Removed" evidence="8 11 14">
    <location>
        <position position="1"/>
    </location>
</feature>
<feature type="chain" id="PRO_0000081629" description="MKI67 FHA domain-interacting nucleolar phosphoprotein">
    <location>
        <begin position="2"/>
        <end position="293"/>
    </location>
</feature>
<feature type="domain" description="RRM" evidence="1">
    <location>
        <begin position="45"/>
        <end position="123"/>
    </location>
</feature>
<feature type="region of interest" description="Disordered" evidence="2">
    <location>
        <begin position="197"/>
        <end position="239"/>
    </location>
</feature>
<feature type="region of interest" description="Interaction with MKI67">
    <location>
        <begin position="226"/>
        <end position="269"/>
    </location>
</feature>
<feature type="region of interest" description="Disordered" evidence="2">
    <location>
        <begin position="271"/>
        <end position="293"/>
    </location>
</feature>
<feature type="compositionally biased region" description="Polar residues" evidence="2">
    <location>
        <begin position="197"/>
        <end position="207"/>
    </location>
</feature>
<feature type="compositionally biased region" description="Basic residues" evidence="2">
    <location>
        <begin position="282"/>
        <end position="293"/>
    </location>
</feature>
<feature type="modified residue" description="N-acetylalanine" evidence="8 11 14">
    <location>
        <position position="2"/>
    </location>
</feature>
<feature type="modified residue" description="Omega-N-methylarginine; by PRMT1 and PRMT8" evidence="7">
    <location>
        <position position="114"/>
    </location>
</feature>
<feature type="modified residue" description="Phosphoserine" evidence="15">
    <location>
        <position position="145"/>
    </location>
</feature>
<feature type="modified residue" description="Phosphoserine" evidence="12 13">
    <location>
        <position position="218"/>
    </location>
</feature>
<feature type="modified residue" description="Phosphothreonine" evidence="9 12 13 15">
    <location>
        <position position="223"/>
    </location>
</feature>
<feature type="modified residue" description="Phosphoserine" evidence="6">
    <location>
        <position position="230"/>
    </location>
</feature>
<feature type="modified residue" description="Phosphothreonine" evidence="4 6 10">
    <location>
        <position position="234"/>
    </location>
</feature>
<feature type="modified residue" description="Phosphothreonine" evidence="6 10">
    <location>
        <position position="238"/>
    </location>
</feature>
<feature type="modified residue" description="Omega-N-methylated arginine; by PRMT1 and PRMT8" evidence="7">
    <location>
        <position position="244"/>
    </location>
</feature>
<feature type="modified residue" description="Omega-N-methylated arginine; by PRMT1 and PRMT8" evidence="7">
    <location>
        <position position="245"/>
    </location>
</feature>
<feature type="modified residue" description="Phosphoserine" evidence="13 15">
    <location>
        <position position="247"/>
    </location>
</feature>
<feature type="modified residue" description="Phosphothreonine" evidence="10">
    <location>
        <position position="279"/>
    </location>
</feature>
<feature type="modified residue" description="Omega-N-methylarginine; by PRMT1 and PRMT8" evidence="7">
    <location>
        <position position="284"/>
    </location>
</feature>
<feature type="cross-link" description="Glycyl lysine isopeptide (Lys-Gly) (interchain with G-Cter in SUMO2)" evidence="17">
    <location>
        <position position="38"/>
    </location>
</feature>
<feature type="cross-link" description="Glycyl lysine isopeptide (Lys-Gly) (interchain with G-Cter in SUMO2)" evidence="17">
    <location>
        <position position="139"/>
    </location>
</feature>
<feature type="cross-link" description="Glycyl lysine isopeptide (Lys-Gly) (interchain with G-Cter in SUMO2)" evidence="17">
    <location>
        <position position="179"/>
    </location>
</feature>
<feature type="cross-link" description="Glycyl lysine isopeptide (Lys-Gly) (interchain with G-Cter in SUMO2)" evidence="17">
    <location>
        <position position="192"/>
    </location>
</feature>
<feature type="cross-link" description="Glycyl lysine isopeptide (Lys-Gly) (interchain with G-Cter in SUMO1); alternate" evidence="16">
    <location>
        <position position="271"/>
    </location>
</feature>
<feature type="cross-link" description="Glycyl lysine isopeptide (Lys-Gly) (interchain with G-Cter in SUMO2); alternate" evidence="17">
    <location>
        <position position="271"/>
    </location>
</feature>
<feature type="sequence variant" id="VAR_027182" description="In dbSNP:rs17852212." evidence="5">
    <original>P</original>
    <variation>Q</variation>
    <location>
        <position position="144"/>
    </location>
</feature>
<feature type="mutagenesis site" description="Loss of phosphorylation site." evidence="6">
    <original>S</original>
    <variation>A</variation>
    <location>
        <position position="230"/>
    </location>
</feature>
<feature type="mutagenesis site" description="Loss of phosphorylation site. Abrogates interaction with MKI67." evidence="3 6">
    <original>T</original>
    <variation>A</variation>
    <location>
        <position position="234"/>
    </location>
</feature>
<feature type="mutagenesis site" description="Reduces phosphorylation at T-234." evidence="6">
    <original>P</original>
    <variation>A</variation>
    <location>
        <position position="235"/>
    </location>
</feature>
<feature type="mutagenesis site" description="Loss of phosphorylation site. Abrogates interaction with MKI67." evidence="3 6">
    <original>T</original>
    <variation>A</variation>
    <location>
        <position position="238"/>
    </location>
</feature>
<feature type="mutagenesis site" description="Reduces phosphorylation at T-234 and T-238." evidence="6">
    <original>P</original>
    <variation>A</variation>
    <location>
        <position position="239"/>
    </location>
</feature>
<feature type="helix" evidence="18">
    <location>
        <begin position="239"/>
        <end position="251"/>
    </location>
</feature>
<feature type="helix" evidence="18">
    <location>
        <begin position="254"/>
        <end position="257"/>
    </location>
</feature>
<feature type="strand" evidence="18">
    <location>
        <begin position="260"/>
        <end position="265"/>
    </location>
</feature>
<accession>Q9BYG3</accession>
<accession>A8K788</accession>
<accession>Q8TB66</accession>
<accession>Q96ED4</accession>
<keyword id="KW-0002">3D-structure</keyword>
<keyword id="KW-0007">Acetylation</keyword>
<keyword id="KW-0158">Chromosome</keyword>
<keyword id="KW-0903">Direct protein sequencing</keyword>
<keyword id="KW-1017">Isopeptide bond</keyword>
<keyword id="KW-0488">Methylation</keyword>
<keyword id="KW-0539">Nucleus</keyword>
<keyword id="KW-0597">Phosphoprotein</keyword>
<keyword id="KW-1267">Proteomics identification</keyword>
<keyword id="KW-1185">Reference proteome</keyword>
<keyword id="KW-0694">RNA-binding</keyword>
<keyword id="KW-0832">Ubl conjugation</keyword>
<comment type="subunit">
    <text evidence="6">Binds to the FHA domain of MKI67; this interaction is enhanced in mitosis.</text>
</comment>
<comment type="interaction">
    <interactant intactId="EBI-2561019">
        <id>Q9BYG3</id>
    </interactant>
    <interactant intactId="EBI-876367">
        <id>P46013</id>
        <label>MKI67</label>
    </interactant>
    <organismsDiffer>false</organismsDiffer>
    <experiments>3</experiments>
</comment>
<comment type="interaction">
    <interactant intactId="EBI-2561019">
        <id>Q9BYG3</id>
    </interactant>
    <interactant intactId="EBI-357849">
        <id>Q15025</id>
        <label>TNIP1</label>
    </interactant>
    <organismsDiffer>false</organismsDiffer>
    <experiments>3</experiments>
</comment>
<comment type="subcellular location">
    <subcellularLocation>
        <location>Nucleus</location>
        <location>Nucleolus</location>
    </subcellularLocation>
    <subcellularLocation>
        <location>Chromosome</location>
    </subcellularLocation>
    <text>Localizes to mitotic chromosomes in conjunction with MKI67.</text>
</comment>
<comment type="PTM">
    <text evidence="3 4 6">Sequentially phosphorylated on Thr-238, Thr-234 and Ser-230. Thr-234 is phosphorylated only when Thr-238 is phosphorylated. Likewise, phosphorylation at Ser-230 requires that Thr-234 and Thr-238 are phosphorylated. Phosphorylation enhances MKI67 binding.</text>
</comment>
<gene>
    <name type="primary">NIFK</name>
    <name type="synonym">MKI67IP</name>
    <name type="synonym">NOPP34</name>
</gene>
<evidence type="ECO:0000255" key="1">
    <source>
        <dbReference type="PROSITE-ProRule" id="PRU00176"/>
    </source>
</evidence>
<evidence type="ECO:0000256" key="2">
    <source>
        <dbReference type="SAM" id="MobiDB-lite"/>
    </source>
</evidence>
<evidence type="ECO:0000269" key="3">
    <source>
    </source>
</evidence>
<evidence type="ECO:0000269" key="4">
    <source>
    </source>
</evidence>
<evidence type="ECO:0000269" key="5">
    <source>
    </source>
</evidence>
<evidence type="ECO:0000269" key="6">
    <source>
    </source>
</evidence>
<evidence type="ECO:0000269" key="7">
    <source>
    </source>
</evidence>
<evidence type="ECO:0000269" key="8">
    <source ref="6"/>
</evidence>
<evidence type="ECO:0007744" key="9">
    <source>
    </source>
</evidence>
<evidence type="ECO:0007744" key="10">
    <source>
    </source>
</evidence>
<evidence type="ECO:0007744" key="11">
    <source>
    </source>
</evidence>
<evidence type="ECO:0007744" key="12">
    <source>
    </source>
</evidence>
<evidence type="ECO:0007744" key="13">
    <source>
    </source>
</evidence>
<evidence type="ECO:0007744" key="14">
    <source>
    </source>
</evidence>
<evidence type="ECO:0007744" key="15">
    <source>
    </source>
</evidence>
<evidence type="ECO:0007744" key="16">
    <source>
    </source>
</evidence>
<evidence type="ECO:0007744" key="17">
    <source>
    </source>
</evidence>
<evidence type="ECO:0007829" key="18">
    <source>
        <dbReference type="PDB" id="2AFF"/>
    </source>
</evidence>
<sequence>MATFSGPAGPILSLNPQEDVEFQKEVAQVRKRITQRKKQEQLTPGVVYVRHLPNLLDETQIFSYFSQFGTVTRFRLSRSKRTGNSKGYAFVEFESEDVAKIVAETMNNYLFGERLLECHFMPPEKVHKELFKDWNIPFKQPSYPSVKRYNRNRTLTQKLRMEERFKKKERLLRKKLAKKGIDYDFPSLILQKTESISKTNRQTSTKGQVLRKKKKKVSGTLDTPEKTVDSQGPTPVCTPTFLERRKSQVAELNDDDKDDEIVFKQPISCVKEEIQETQTPTHSRKKRRRSSNQ</sequence>